<protein>
    <recommendedName>
        <fullName evidence="8">Major royal jelly protein 7</fullName>
    </recommendedName>
    <alternativeName>
        <fullName evidence="10">Bee-milk protein Mrjp7</fullName>
    </alternativeName>
</protein>
<name>MRJP7_APIME</name>
<comment type="function">
    <text evidence="3 6 7 10">Component of royal jelly, a substance produced in the hypopharyngeal gland containing proteins, free amino acids, fatty acids, sugars and other nutrients, which is fed to developing larvae by worker nurse bees (PubMed:15607658, PubMed:31410279). All larvae are fed some royal jelly (also known as worker jelly) early in their development but it forms the principal source of nutrition for larvae destined to become queen bees (Probable). Produced in the spermatheca of adult queen bees, along with other major royal jelly proteins, where it may act as a nutrient supply for sperm stored by mated queens, or be involved in energy metabolism (PubMed:34442256).</text>
</comment>
<comment type="subcellular location">
    <subcellularLocation>
        <location evidence="3 6">Secreted</location>
    </subcellularLocation>
    <text evidence="3 6">Royal jelly.</text>
</comment>
<comment type="tissue specificity">
    <text evidence="3 4 6 7">Found in and secreted from the hypopharyngeal glands of the worker honey bee (at protein level); expression peaks at 12 days post eclosion (PubMed:15607658). Expressed in the brains of adult worker bees peaking at 12 days post eclosion (at protein level) (PubMed:19203288, PubMed:31410279). Expressed in the spermatheca of adult queen bees (at protein level); Expression levels are higher in mated queens than in virgin queens (PubMed:34442256).</text>
</comment>
<comment type="developmental stage">
    <text evidence="4">During the age-related subcaste transition from nurse worker bee to forager worker bee expression of major royal jelly proteins, including this one, is reduced and alpha-glucosidase is increased (at protein level).</text>
</comment>
<comment type="induction">
    <text evidence="5">Unlike other major royal jelly proteins, not down-regulated by the ecdysteroid 20-hydroxyecdysone (ecdysterone or 20E).</text>
</comment>
<comment type="similarity">
    <text evidence="10">Belongs to the major royal jelly protein family.</text>
</comment>
<organism evidence="13">
    <name type="scientific">Apis mellifera</name>
    <name type="common">Honeybee</name>
    <dbReference type="NCBI Taxonomy" id="7460"/>
    <lineage>
        <taxon>Eukaryota</taxon>
        <taxon>Metazoa</taxon>
        <taxon>Ecdysozoa</taxon>
        <taxon>Arthropoda</taxon>
        <taxon>Hexapoda</taxon>
        <taxon>Insecta</taxon>
        <taxon>Pterygota</taxon>
        <taxon>Neoptera</taxon>
        <taxon>Endopterygota</taxon>
        <taxon>Hymenoptera</taxon>
        <taxon>Apocrita</taxon>
        <taxon>Aculeata</taxon>
        <taxon>Apoidea</taxon>
        <taxon>Anthophila</taxon>
        <taxon>Apidae</taxon>
        <taxon>Apis</taxon>
    </lineage>
</organism>
<evidence type="ECO:0000255" key="1"/>
<evidence type="ECO:0000255" key="2">
    <source>
        <dbReference type="PROSITE-ProRule" id="PRU00498"/>
    </source>
</evidence>
<evidence type="ECO:0000269" key="3">
    <source>
    </source>
</evidence>
<evidence type="ECO:0000269" key="4">
    <source>
    </source>
</evidence>
<evidence type="ECO:0000269" key="5">
    <source>
    </source>
</evidence>
<evidence type="ECO:0000269" key="6">
    <source>
    </source>
</evidence>
<evidence type="ECO:0000269" key="7">
    <source>
    </source>
</evidence>
<evidence type="ECO:0000303" key="8">
    <source>
    </source>
</evidence>
<evidence type="ECO:0000303" key="9">
    <source>
    </source>
</evidence>
<evidence type="ECO:0000305" key="10"/>
<evidence type="ECO:0000312" key="11">
    <source>
        <dbReference type="EMBL" id="DAA01512.1"/>
    </source>
</evidence>
<evidence type="ECO:0000312" key="12">
    <source>
        <dbReference type="EnsemblMetazoa" id="NP_001014429"/>
    </source>
</evidence>
<evidence type="ECO:0000312" key="13">
    <source>
        <dbReference type="Proteomes" id="UP000005203"/>
    </source>
</evidence>
<evidence type="ECO:0000312" key="14">
    <source>
        <dbReference type="RefSeq" id="NP_001014429.1"/>
    </source>
</evidence>
<feature type="signal peptide" evidence="1">
    <location>
        <begin position="1"/>
        <end position="17"/>
    </location>
</feature>
<feature type="chain" id="PRO_5035544058" description="Major royal jelly protein 7" evidence="1">
    <location>
        <begin position="18"/>
        <end position="443"/>
    </location>
</feature>
<feature type="glycosylation site" description="N-linked (GlcNAc...) asparagine" evidence="2">
    <location>
        <position position="145"/>
    </location>
</feature>
<feature type="glycosylation site" description="N-linked (GlcNAc...) asparagine" evidence="2">
    <location>
        <position position="161"/>
    </location>
</feature>
<feature type="glycosylation site" description="N-linked (GlcNAc...) asparagine" evidence="2">
    <location>
        <position position="178"/>
    </location>
</feature>
<feature type="glycosylation site" description="N-linked (GlcNAc...) asparagine" evidence="2">
    <location>
        <position position="321"/>
    </location>
</feature>
<dbReference type="EMBL" id="BK001420">
    <property type="protein sequence ID" value="DAA01512.1"/>
    <property type="molecule type" value="mRNA"/>
</dbReference>
<dbReference type="RefSeq" id="NP_001014429.1">
    <property type="nucleotide sequence ID" value="NM_001014429.1"/>
</dbReference>
<dbReference type="SMR" id="A0A7M6W5F9"/>
<dbReference type="EnsemblMetazoa" id="NM_001014429">
    <property type="protein sequence ID" value="NP_001014429"/>
    <property type="gene ID" value="GeneID_409555"/>
</dbReference>
<dbReference type="GeneID" id="409555"/>
<dbReference type="KEGG" id="ame:409555"/>
<dbReference type="CTD" id="409555"/>
<dbReference type="OrthoDB" id="3199782at2759"/>
<dbReference type="Proteomes" id="UP000005203">
    <property type="component" value="Linkage group LG11"/>
</dbReference>
<dbReference type="GO" id="GO:0005576">
    <property type="term" value="C:extracellular region"/>
    <property type="evidence" value="ECO:0007669"/>
    <property type="project" value="UniProtKB-SubCell"/>
</dbReference>
<dbReference type="Gene3D" id="2.120.10.30">
    <property type="entry name" value="TolB, C-terminal domain"/>
    <property type="match status" value="1"/>
</dbReference>
<dbReference type="InterPro" id="IPR011042">
    <property type="entry name" value="6-blade_b-propeller_TolB-like"/>
</dbReference>
<dbReference type="InterPro" id="IPR017996">
    <property type="entry name" value="Royal_jelly/protein_yellow"/>
</dbReference>
<dbReference type="PANTHER" id="PTHR10009:SF7">
    <property type="entry name" value="GH10609P-RELATED"/>
    <property type="match status" value="1"/>
</dbReference>
<dbReference type="PANTHER" id="PTHR10009">
    <property type="entry name" value="PROTEIN YELLOW-RELATED"/>
    <property type="match status" value="1"/>
</dbReference>
<dbReference type="Pfam" id="PF03022">
    <property type="entry name" value="MRJP"/>
    <property type="match status" value="1"/>
</dbReference>
<dbReference type="PRINTS" id="PR01366">
    <property type="entry name" value="ROYALJELLY"/>
</dbReference>
<dbReference type="SUPFAM" id="SSF101898">
    <property type="entry name" value="NHL repeat"/>
    <property type="match status" value="1"/>
</dbReference>
<dbReference type="PROSITE" id="PS51257">
    <property type="entry name" value="PROKAR_LIPOPROTEIN"/>
    <property type="match status" value="1"/>
</dbReference>
<accession>A0A7M6W5F9</accession>
<accession>A0A8B6WZ41</accession>
<accession>A0A8U1C1L9</accession>
<accession>Q6IMJ9</accession>
<proteinExistence type="evidence at protein level"/>
<reference evidence="11 14" key="1">
    <citation type="journal article" date="2004" name="J. Insect Physiol.">
        <title>The MRJP/YELLOW protein family of Apis mellifera: identification of new members in the EST library.</title>
        <authorList>
            <person name="Albert S."/>
            <person name="Klaudiny J."/>
        </authorList>
    </citation>
    <scope>NUCLEOTIDE SEQUENCE [MRNA]</scope>
</reference>
<reference evidence="14" key="2">
    <citation type="journal article" date="2006" name="Nature">
        <title>Insights into social insects from the genome of the honeybee Apis mellifera.</title>
        <authorList>
            <consortium name="Honeybee genome sequencing consortium"/>
        </authorList>
    </citation>
    <scope>NUCLEOTIDE SEQUENCE [LARGE SCALE GENOMIC DNA]</scope>
</reference>
<reference evidence="14" key="3">
    <citation type="journal article" date="2014" name="BMC Genomics">
        <title>Finding the missing honey bee genes: lessons learned from a genome upgrade.</title>
        <authorList>
            <consortium name="HGSC production teams"/>
            <consortium name="Honey Bee Genome Sequencing Consortium"/>
            <person name="Elsik C.G."/>
            <person name="Worley K.C."/>
            <person name="Bennett A.K."/>
            <person name="Beye M."/>
            <person name="Camara F."/>
            <person name="Childers C.P."/>
            <person name="de Graaf D.C."/>
            <person name="Debyser G."/>
            <person name="Deng J."/>
            <person name="Devreese B."/>
            <person name="Elhaik E."/>
            <person name="Evans J.D."/>
            <person name="Foster L.J."/>
            <person name="Graur D."/>
            <person name="Guigo R."/>
            <person name="Hoff K.J."/>
            <person name="Holder M.E."/>
            <person name="Hudson M.E."/>
            <person name="Hunt G.J."/>
            <person name="Jiang H."/>
            <person name="Joshi V."/>
            <person name="Khetani R.S."/>
            <person name="Kosarev P."/>
            <person name="Kovar C.L."/>
            <person name="Ma J."/>
            <person name="Maleszka R."/>
            <person name="Moritz R.F."/>
            <person name="Munoz-Torres M.C."/>
            <person name="Murphy T.D."/>
            <person name="Muzny D.M."/>
            <person name="Newsham I.F."/>
            <person name="Reese J.T."/>
            <person name="Robertson H.M."/>
            <person name="Robinson G.E."/>
            <person name="Rueppell O."/>
            <person name="Solovyev V."/>
            <person name="Stanke M."/>
            <person name="Stolle E."/>
            <person name="Tsuruda J.M."/>
            <person name="Vaerenbergh M.V."/>
            <person name="Waterhouse R.M."/>
            <person name="Weaver D.B."/>
            <person name="Whitfield C.W."/>
            <person name="Wu Y."/>
            <person name="Zdobnov E.M."/>
            <person name="Zhang L."/>
            <person name="Zhu D."/>
            <person name="Gibbs R.A."/>
        </authorList>
    </citation>
    <scope>NUCLEOTIDE SEQUENCE [LARGE SCALE GENOMIC DNA]</scope>
</reference>
<reference evidence="14" key="4">
    <citation type="submission" date="2024-08" db="UniProtKB">
        <authorList>
            <consortium name="RefSeq"/>
        </authorList>
    </citation>
    <scope>NUCLEOTIDE SEQUENCE [LARGE SCALE GENOMIC DNA]</scope>
    <source>
        <strain evidence="14">DH4</strain>
    </source>
</reference>
<reference evidence="10" key="5">
    <citation type="journal article" date="2005" name="Insect Biochem. Mol. Biol.">
        <title>Profiling the proteome complement of the secretion from hypopharyngeal gland of Africanized nurse-honeybees (Apis mellifera L.).</title>
        <authorList>
            <person name="Santos K.S."/>
            <person name="dos Santos L.D."/>
            <person name="Mendes M.A."/>
            <person name="de Souza B.M."/>
            <person name="Malaspina O."/>
            <person name="Palma M.S."/>
        </authorList>
    </citation>
    <scope>FUNCTION</scope>
    <scope>SUBCELLULAR LOCATION</scope>
    <scope>TISSUE SPECIFICITY</scope>
</reference>
<reference evidence="14" key="6">
    <citation type="journal article" date="2006" name="Genome Res.">
        <title>Evolution of the Yellow/Major Royal Jelly Protein family and the emergence of social behavior in honey bees.</title>
        <authorList>
            <person name="Drapeau M.D."/>
            <person name="Albert S."/>
            <person name="Kucharski R."/>
            <person name="Prusko C."/>
            <person name="Maleszka R."/>
        </authorList>
    </citation>
    <scope>IDENTIFICATION</scope>
</reference>
<reference evidence="10" key="7">
    <citation type="journal article" date="2009" name="J. Proteome Res.">
        <title>Proteomic analysis of honey bee brain upon ontogenetic and behavioral development.</title>
        <authorList>
            <person name="Garcia L."/>
            <person name="Saraiva Garcia C.H."/>
            <person name="Calabria L.K."/>
            <person name="Costa Nunes da Cruz G."/>
            <person name="Sanchez Puentes A."/>
            <person name="Bao S.N."/>
            <person name="Fontes W."/>
            <person name="Ricart C.A."/>
            <person name="Salmen Espindola F."/>
            <person name="Valle de Sousa M."/>
        </authorList>
    </citation>
    <scope>TISSUE SPECIFICITY</scope>
    <scope>DEVELOPMENTAL STAGE</scope>
    <scope>MASS SPECTROMETRY</scope>
    <scope>IDENTIFICATION BY MASS SPECTROMETRY</scope>
</reference>
<reference evidence="10" key="8">
    <citation type="journal article" date="2018" name="Insects">
        <title>Transcriptional Control of Honey Bee (Apis mellifera) Major Royal Jelly Proteins by 20-Hydroxyecdysone.</title>
        <authorList>
            <person name="Winkler P."/>
            <person name="Sieg F."/>
            <person name="Buttstedt A."/>
        </authorList>
    </citation>
    <scope>ABSENCE OF INDUCTION BY 20-HYDROXYECDYSONE</scope>
</reference>
<reference evidence="10" key="9">
    <citation type="journal article" date="2019" name="Ecol. Evol.">
        <title>The rise and fall of major royal jelly proteins during a honeybee (Apis mellifera) workers' life.</title>
        <authorList>
            <person name="Dobritzsch D."/>
            <person name="Aumer D."/>
            <person name="Fuszard M."/>
            <person name="Erler S."/>
            <person name="Buttstedt A."/>
        </authorList>
    </citation>
    <scope>FUNCTION</scope>
    <scope>SUBCELLULAR LOCATION</scope>
    <scope>TISSUE SPECIFICITY</scope>
    <scope>IDENTIFICATION BY MASS SPECTROMETRY</scope>
</reference>
<reference evidence="10" key="10">
    <citation type="journal article" date="2021" name="Insects">
        <title>Upregulation of Transferrin and Major Royal Jelly Proteins in the Spermathecal Fluid of Mated Honeybee (Apis mellifera) Queens.</title>
        <authorList>
            <person name="Park H.G."/>
            <person name="Kim B.Y."/>
            <person name="Kim J.M."/>
            <person name="Choi Y.S."/>
            <person name="Yoon H.J."/>
            <person name="Lee K.S."/>
            <person name="Jin B.R."/>
        </authorList>
    </citation>
    <scope>FUNCTION</scope>
    <scope>TISSUE SPECIFICITY</scope>
</reference>
<sequence length="443" mass="50541">MTRWLFMVACLGIACQGAILRENSARNLKNSLKVMHEWKYIDYDFGSEEKRQAAIQSDEYDHTKNYPFDVDQWRDKTFVTVLRYDGVPSSLNVISEKTGNGGRLLQPYPDWSWTKYKDCSGIVSAYSIAIDKFDRLWVLDSGLVNNTQPMCFPKLLVFDLNSSQLIKQVDIPHEIAVNTTTEQGRLKSLAVQAISSVNTLVYIADNKGDGLIVYQNSDDSFHRLTSNTFNYDPRYTKMTVEGESFTVQDGIYGMALSPMTNNLYYSPLASRDLYYVNTKPFIKSEYGENKVQYNGVQDVFNTQTTAKAVSKNGILFFGLVNNTAVGCWNEHQTLQRENTDMVAQNEETLQMIVGMKIKQLLPHIVIIDIDNIINDEYMLVLTNRMQKILNNDLNFNDINFRILIGGVSDLLENTRCTNFNIQNDDSDENNDDSIRITIDASFN</sequence>
<gene>
    <name evidence="8 9" type="primary">Mrjp7</name>
    <name evidence="12" type="synonym">409555</name>
    <name evidence="9" type="synonym">GB11022</name>
</gene>
<keyword id="KW-0325">Glycoprotein</keyword>
<keyword id="KW-1185">Reference proteome</keyword>
<keyword id="KW-0964">Secreted</keyword>
<keyword id="KW-0732">Signal</keyword>